<proteinExistence type="evidence at protein level"/>
<organism>
    <name type="scientific">Mus musculus</name>
    <name type="common">Mouse</name>
    <dbReference type="NCBI Taxonomy" id="10090"/>
    <lineage>
        <taxon>Eukaryota</taxon>
        <taxon>Metazoa</taxon>
        <taxon>Chordata</taxon>
        <taxon>Craniata</taxon>
        <taxon>Vertebrata</taxon>
        <taxon>Euteleostomi</taxon>
        <taxon>Mammalia</taxon>
        <taxon>Eutheria</taxon>
        <taxon>Euarchontoglires</taxon>
        <taxon>Glires</taxon>
        <taxon>Rodentia</taxon>
        <taxon>Myomorpha</taxon>
        <taxon>Muroidea</taxon>
        <taxon>Muridae</taxon>
        <taxon>Murinae</taxon>
        <taxon>Mus</taxon>
        <taxon>Mus</taxon>
    </lineage>
</organism>
<evidence type="ECO:0000250" key="1"/>
<evidence type="ECO:0000305" key="2"/>
<dbReference type="EC" id="1.14.14.1"/>
<dbReference type="EMBL" id="U62294">
    <property type="protein sequence ID" value="AAB87635.1"/>
    <property type="molecule type" value="mRNA"/>
</dbReference>
<dbReference type="EMBL" id="BC021624">
    <property type="protein sequence ID" value="AAH21624.1"/>
    <property type="molecule type" value="mRNA"/>
</dbReference>
<dbReference type="CCDS" id="CCDS18371.1"/>
<dbReference type="RefSeq" id="NP_034137.1">
    <property type="nucleotide sequence ID" value="NM_010007.5"/>
</dbReference>
<dbReference type="SMR" id="O54749"/>
<dbReference type="BioGRID" id="199026">
    <property type="interactions" value="25"/>
</dbReference>
<dbReference type="FunCoup" id="O54749">
    <property type="interactions" value="1487"/>
</dbReference>
<dbReference type="STRING" id="10090.ENSMUSP00000030299"/>
<dbReference type="iPTMnet" id="O54749"/>
<dbReference type="PhosphoSitePlus" id="O54749"/>
<dbReference type="SwissPalm" id="O54749"/>
<dbReference type="jPOST" id="O54749"/>
<dbReference type="PaxDb" id="10090-ENSMUSP00000030299"/>
<dbReference type="PeptideAtlas" id="O54749"/>
<dbReference type="ProteomicsDB" id="278006"/>
<dbReference type="Ensembl" id="ENSMUST00000030299.8">
    <property type="protein sequence ID" value="ENSMUSP00000030299.8"/>
    <property type="gene ID" value="ENSMUSG00000052520.8"/>
</dbReference>
<dbReference type="GeneID" id="13109"/>
<dbReference type="KEGG" id="mmu:13109"/>
<dbReference type="UCSC" id="uc008ttl.1">
    <property type="organism name" value="mouse"/>
</dbReference>
<dbReference type="AGR" id="MGI:1270149"/>
<dbReference type="CTD" id="13109"/>
<dbReference type="MGI" id="MGI:1270149">
    <property type="gene designation" value="Cyp2j5"/>
</dbReference>
<dbReference type="VEuPathDB" id="HostDB:ENSMUSG00000052520"/>
<dbReference type="eggNOG" id="KOG0156">
    <property type="taxonomic scope" value="Eukaryota"/>
</dbReference>
<dbReference type="GeneTree" id="ENSGT00950000182879"/>
<dbReference type="HOGENOM" id="CLU_001570_22_0_1"/>
<dbReference type="InParanoid" id="O54749"/>
<dbReference type="OMA" id="LINSWAM"/>
<dbReference type="OrthoDB" id="2789670at2759"/>
<dbReference type="PhylomeDB" id="O54749"/>
<dbReference type="TreeFam" id="TF352043"/>
<dbReference type="BioGRID-ORCS" id="13109">
    <property type="hits" value="5 hits in 80 CRISPR screens"/>
</dbReference>
<dbReference type="PRO" id="PR:O54749"/>
<dbReference type="Proteomes" id="UP000000589">
    <property type="component" value="Chromosome 4"/>
</dbReference>
<dbReference type="RNAct" id="O54749">
    <property type="molecule type" value="protein"/>
</dbReference>
<dbReference type="Bgee" id="ENSMUSG00000052520">
    <property type="expression patterns" value="Expressed in right kidney and 27 other cell types or tissues"/>
</dbReference>
<dbReference type="ExpressionAtlas" id="O54749">
    <property type="expression patterns" value="baseline and differential"/>
</dbReference>
<dbReference type="GO" id="GO:0005789">
    <property type="term" value="C:endoplasmic reticulum membrane"/>
    <property type="evidence" value="ECO:0007669"/>
    <property type="project" value="UniProtKB-SubCell"/>
</dbReference>
<dbReference type="GO" id="GO:0020037">
    <property type="term" value="F:heme binding"/>
    <property type="evidence" value="ECO:0007669"/>
    <property type="project" value="InterPro"/>
</dbReference>
<dbReference type="GO" id="GO:0005506">
    <property type="term" value="F:iron ion binding"/>
    <property type="evidence" value="ECO:0007669"/>
    <property type="project" value="InterPro"/>
</dbReference>
<dbReference type="GO" id="GO:0016712">
    <property type="term" value="F:oxidoreductase activity, acting on paired donors, with incorporation or reduction of molecular oxygen, reduced flavin or flavoprotein as one donor, and incorporation of one atom of oxygen"/>
    <property type="evidence" value="ECO:0007669"/>
    <property type="project" value="UniProtKB-EC"/>
</dbReference>
<dbReference type="GO" id="GO:0001998">
    <property type="term" value="P:angiotensin-mediated vasoconstriction involved in regulation of systemic arterial blood pressure"/>
    <property type="evidence" value="ECO:0000315"/>
    <property type="project" value="MGI"/>
</dbReference>
<dbReference type="GO" id="GO:2000863">
    <property type="term" value="P:positive regulation of estrogen secretion"/>
    <property type="evidence" value="ECO:0000315"/>
    <property type="project" value="MGI"/>
</dbReference>
<dbReference type="GO" id="GO:0001990">
    <property type="term" value="P:regulation of systemic arterial blood pressure by hormone"/>
    <property type="evidence" value="ECO:0000315"/>
    <property type="project" value="MGI"/>
</dbReference>
<dbReference type="GO" id="GO:0097254">
    <property type="term" value="P:renal tubular secretion"/>
    <property type="evidence" value="ECO:0000315"/>
    <property type="project" value="MGI"/>
</dbReference>
<dbReference type="CDD" id="cd20662">
    <property type="entry name" value="CYP2J"/>
    <property type="match status" value="1"/>
</dbReference>
<dbReference type="FunFam" id="1.10.630.10:FF:000004">
    <property type="entry name" value="cytochrome P450 2D15 isoform X1"/>
    <property type="match status" value="1"/>
</dbReference>
<dbReference type="Gene3D" id="1.10.630.10">
    <property type="entry name" value="Cytochrome P450"/>
    <property type="match status" value="1"/>
</dbReference>
<dbReference type="InterPro" id="IPR001128">
    <property type="entry name" value="Cyt_P450"/>
</dbReference>
<dbReference type="InterPro" id="IPR017972">
    <property type="entry name" value="Cyt_P450_CS"/>
</dbReference>
<dbReference type="InterPro" id="IPR002401">
    <property type="entry name" value="Cyt_P450_E_grp-I"/>
</dbReference>
<dbReference type="InterPro" id="IPR008071">
    <property type="entry name" value="Cyt_P450_E_grp-I_CYP2J-like"/>
</dbReference>
<dbReference type="InterPro" id="IPR036396">
    <property type="entry name" value="Cyt_P450_sf"/>
</dbReference>
<dbReference type="InterPro" id="IPR050182">
    <property type="entry name" value="Cytochrome_P450_fam2"/>
</dbReference>
<dbReference type="PANTHER" id="PTHR24300:SF177">
    <property type="entry name" value="CYTOCHROME P450 2J2"/>
    <property type="match status" value="1"/>
</dbReference>
<dbReference type="PANTHER" id="PTHR24300">
    <property type="entry name" value="CYTOCHROME P450 508A4-RELATED"/>
    <property type="match status" value="1"/>
</dbReference>
<dbReference type="Pfam" id="PF00067">
    <property type="entry name" value="p450"/>
    <property type="match status" value="1"/>
</dbReference>
<dbReference type="PRINTS" id="PR00463">
    <property type="entry name" value="EP450I"/>
</dbReference>
<dbReference type="PRINTS" id="PR01688">
    <property type="entry name" value="EP450ICYP2J"/>
</dbReference>
<dbReference type="PRINTS" id="PR00385">
    <property type="entry name" value="P450"/>
</dbReference>
<dbReference type="SUPFAM" id="SSF48264">
    <property type="entry name" value="Cytochrome P450"/>
    <property type="match status" value="1"/>
</dbReference>
<dbReference type="PROSITE" id="PS00086">
    <property type="entry name" value="CYTOCHROME_P450"/>
    <property type="match status" value="1"/>
</dbReference>
<comment type="catalytic activity">
    <reaction>
        <text>an organic molecule + reduced [NADPH--hemoprotein reductase] + O2 = an alcohol + oxidized [NADPH--hemoprotein reductase] + H2O + H(+)</text>
        <dbReference type="Rhea" id="RHEA:17149"/>
        <dbReference type="Rhea" id="RHEA-COMP:11964"/>
        <dbReference type="Rhea" id="RHEA-COMP:11965"/>
        <dbReference type="ChEBI" id="CHEBI:15377"/>
        <dbReference type="ChEBI" id="CHEBI:15378"/>
        <dbReference type="ChEBI" id="CHEBI:15379"/>
        <dbReference type="ChEBI" id="CHEBI:30879"/>
        <dbReference type="ChEBI" id="CHEBI:57618"/>
        <dbReference type="ChEBI" id="CHEBI:58210"/>
        <dbReference type="ChEBI" id="CHEBI:142491"/>
        <dbReference type="EC" id="1.14.14.1"/>
    </reaction>
</comment>
<comment type="cofactor">
    <cofactor evidence="1">
        <name>heme</name>
        <dbReference type="ChEBI" id="CHEBI:30413"/>
    </cofactor>
</comment>
<comment type="subcellular location">
    <subcellularLocation>
        <location>Endoplasmic reticulum membrane</location>
        <topology>Peripheral membrane protein</topology>
    </subcellularLocation>
    <subcellularLocation>
        <location>Microsome membrane</location>
        <topology>Peripheral membrane protein</topology>
    </subcellularLocation>
</comment>
<comment type="similarity">
    <text evidence="2">Belongs to the cytochrome P450 family.</text>
</comment>
<feature type="chain" id="PRO_0000051771" description="Cytochrome P450 2J5">
    <location>
        <begin position="1"/>
        <end position="501"/>
    </location>
</feature>
<feature type="binding site" description="axial binding residue" evidence="1">
    <location>
        <position position="447"/>
    </location>
    <ligand>
        <name>heme</name>
        <dbReference type="ChEBI" id="CHEBI:30413"/>
    </ligand>
    <ligandPart>
        <name>Fe</name>
        <dbReference type="ChEBI" id="CHEBI:18248"/>
    </ligandPart>
</feature>
<keyword id="KW-0256">Endoplasmic reticulum</keyword>
<keyword id="KW-0349">Heme</keyword>
<keyword id="KW-0408">Iron</keyword>
<keyword id="KW-0472">Membrane</keyword>
<keyword id="KW-0479">Metal-binding</keyword>
<keyword id="KW-0492">Microsome</keyword>
<keyword id="KW-0503">Monooxygenase</keyword>
<keyword id="KW-0560">Oxidoreductase</keyword>
<keyword id="KW-1185">Reference proteome</keyword>
<gene>
    <name type="primary">Cyp2j5</name>
</gene>
<name>CP2J5_MOUSE</name>
<sequence>MIMFLSSLVTTFWEALHLKTLVLAVVTFLFLINILRSRHPKNYPPGPWRLPFVGNFFQIDTKQTHLVLQQFVKKYGNVFSLELGQSPVVVVSGLPLIKEMFTHLDQNFVNRFMTPVRERITGKNGLVVSNGQTWKEQRRLALMALRNFGLGKKSLEERIQEETHHLVEAIREEGGQPFNPHLKLINAVSNIICSVTFGERFDYEDCQFQELLQLLDETMHLMGSSAGQLYNGFPCIMKYLPGPHQKIFRNWGKLKLFVSHIVKKHEKDWNPDEPRDFIDAFLIEMQKDPDRTTSFNEENLISTTLDLFLGGTETTSSTLRWALLYMSSYPEIQENVQAEIDRVIGHKRQVSLSDRESMPYTNAVIHEVQRMGNIVPLNSSREVTVDTKFNGFHLPKGTMILTNLTALHRDPKEWATPEVFNPEHFLENGQFKKRESFLPFSMGKRACLGEQLAKSELFIFFSALMQKFTFKPPINEKLSLKFRMGLILSPASYRICAIPRV</sequence>
<accession>O54749</accession>
<protein>
    <recommendedName>
        <fullName>Cytochrome P450 2J5</fullName>
        <ecNumber>1.14.14.1</ecNumber>
    </recommendedName>
    <alternativeName>
        <fullName>Arachidonic acid epoxygenase</fullName>
    </alternativeName>
    <alternativeName>
        <fullName>CYPIIJ5</fullName>
    </alternativeName>
</protein>
<reference key="1">
    <citation type="journal article" date="1998" name="Genomics">
        <title>Mapping of the CYP2J cytochrome P450 genes to human chromosome 1 and mouse chromosome 4.</title>
        <authorList>
            <person name="Ma J."/>
            <person name="Ramachandran S."/>
            <person name="Fiedorek F.T. Jr."/>
            <person name="Zeldin D.C."/>
        </authorList>
    </citation>
    <scope>NUCLEOTIDE SEQUENCE [MRNA]</scope>
    <source>
        <strain>C57BL/6 X CBA</strain>
        <tissue>Liver</tissue>
    </source>
</reference>
<reference key="2">
    <citation type="journal article" date="2004" name="Genome Res.">
        <title>The status, quality, and expansion of the NIH full-length cDNA project: the Mammalian Gene Collection (MGC).</title>
        <authorList>
            <consortium name="The MGC Project Team"/>
        </authorList>
    </citation>
    <scope>NUCLEOTIDE SEQUENCE [LARGE SCALE MRNA]</scope>
    <source>
        <tissue>Liver</tissue>
    </source>
</reference>
<reference key="3">
    <citation type="journal article" date="2010" name="Cell">
        <title>A tissue-specific atlas of mouse protein phosphorylation and expression.</title>
        <authorList>
            <person name="Huttlin E.L."/>
            <person name="Jedrychowski M.P."/>
            <person name="Elias J.E."/>
            <person name="Goswami T."/>
            <person name="Rad R."/>
            <person name="Beausoleil S.A."/>
            <person name="Villen J."/>
            <person name="Haas W."/>
            <person name="Sowa M.E."/>
            <person name="Gygi S.P."/>
        </authorList>
    </citation>
    <scope>IDENTIFICATION BY MASS SPECTROMETRY [LARGE SCALE ANALYSIS]</scope>
    <source>
        <tissue>Kidney</tissue>
        <tissue>Liver</tissue>
    </source>
</reference>